<gene>
    <name evidence="1" type="primary">gcvH</name>
    <name type="ordered locus">Arad_2526</name>
</gene>
<comment type="function">
    <text evidence="1">The glycine cleavage system catalyzes the degradation of glycine. The H protein shuttles the methylamine group of glycine from the P protein to the T protein.</text>
</comment>
<comment type="cofactor">
    <cofactor evidence="1">
        <name>(R)-lipoate</name>
        <dbReference type="ChEBI" id="CHEBI:83088"/>
    </cofactor>
    <text evidence="1">Binds 1 lipoyl cofactor covalently.</text>
</comment>
<comment type="subunit">
    <text evidence="1">The glycine cleavage system is composed of four proteins: P, T, L and H.</text>
</comment>
<comment type="similarity">
    <text evidence="1">Belongs to the GcvH family.</text>
</comment>
<keyword id="KW-0450">Lipoyl</keyword>
<protein>
    <recommendedName>
        <fullName evidence="1">Glycine cleavage system H protein</fullName>
    </recommendedName>
</protein>
<dbReference type="EMBL" id="CP000628">
    <property type="protein sequence ID" value="ACM26696.1"/>
    <property type="molecule type" value="Genomic_DNA"/>
</dbReference>
<dbReference type="RefSeq" id="WP_007696229.1">
    <property type="nucleotide sequence ID" value="NC_011985.1"/>
</dbReference>
<dbReference type="SMR" id="B9JFK6"/>
<dbReference type="STRING" id="311403.Arad_2526"/>
<dbReference type="GeneID" id="86848556"/>
<dbReference type="KEGG" id="ara:Arad_2526"/>
<dbReference type="eggNOG" id="COG0509">
    <property type="taxonomic scope" value="Bacteria"/>
</dbReference>
<dbReference type="HOGENOM" id="CLU_097408_2_0_5"/>
<dbReference type="Proteomes" id="UP000001600">
    <property type="component" value="Chromosome 1"/>
</dbReference>
<dbReference type="GO" id="GO:0005737">
    <property type="term" value="C:cytoplasm"/>
    <property type="evidence" value="ECO:0007669"/>
    <property type="project" value="TreeGrafter"/>
</dbReference>
<dbReference type="GO" id="GO:0005960">
    <property type="term" value="C:glycine cleavage complex"/>
    <property type="evidence" value="ECO:0007669"/>
    <property type="project" value="InterPro"/>
</dbReference>
<dbReference type="GO" id="GO:0019464">
    <property type="term" value="P:glycine decarboxylation via glycine cleavage system"/>
    <property type="evidence" value="ECO:0007669"/>
    <property type="project" value="UniProtKB-UniRule"/>
</dbReference>
<dbReference type="CDD" id="cd06848">
    <property type="entry name" value="GCS_H"/>
    <property type="match status" value="1"/>
</dbReference>
<dbReference type="Gene3D" id="2.40.50.100">
    <property type="match status" value="1"/>
</dbReference>
<dbReference type="HAMAP" id="MF_00272">
    <property type="entry name" value="GcvH"/>
    <property type="match status" value="1"/>
</dbReference>
<dbReference type="InterPro" id="IPR003016">
    <property type="entry name" value="2-oxoA_DH_lipoyl-BS"/>
</dbReference>
<dbReference type="InterPro" id="IPR000089">
    <property type="entry name" value="Biotin_lipoyl"/>
</dbReference>
<dbReference type="InterPro" id="IPR002930">
    <property type="entry name" value="GCV_H"/>
</dbReference>
<dbReference type="InterPro" id="IPR033753">
    <property type="entry name" value="GCV_H/Fam206"/>
</dbReference>
<dbReference type="InterPro" id="IPR017453">
    <property type="entry name" value="GCV_H_sub"/>
</dbReference>
<dbReference type="InterPro" id="IPR011053">
    <property type="entry name" value="Single_hybrid_motif"/>
</dbReference>
<dbReference type="NCBIfam" id="TIGR00527">
    <property type="entry name" value="gcvH"/>
    <property type="match status" value="1"/>
</dbReference>
<dbReference type="NCBIfam" id="NF002270">
    <property type="entry name" value="PRK01202.1"/>
    <property type="match status" value="1"/>
</dbReference>
<dbReference type="PANTHER" id="PTHR11715">
    <property type="entry name" value="GLYCINE CLEAVAGE SYSTEM H PROTEIN"/>
    <property type="match status" value="1"/>
</dbReference>
<dbReference type="PANTHER" id="PTHR11715:SF3">
    <property type="entry name" value="GLYCINE CLEAVAGE SYSTEM H PROTEIN-RELATED"/>
    <property type="match status" value="1"/>
</dbReference>
<dbReference type="Pfam" id="PF01597">
    <property type="entry name" value="GCV_H"/>
    <property type="match status" value="1"/>
</dbReference>
<dbReference type="SUPFAM" id="SSF51230">
    <property type="entry name" value="Single hybrid motif"/>
    <property type="match status" value="1"/>
</dbReference>
<dbReference type="PROSITE" id="PS50968">
    <property type="entry name" value="BIOTINYL_LIPOYL"/>
    <property type="match status" value="1"/>
</dbReference>
<dbReference type="PROSITE" id="PS00189">
    <property type="entry name" value="LIPOYL"/>
    <property type="match status" value="1"/>
</dbReference>
<name>GCSH_RHIR8</name>
<reference key="1">
    <citation type="journal article" date="2009" name="J. Bacteriol.">
        <title>Genome sequences of three Agrobacterium biovars help elucidate the evolution of multichromosome genomes in bacteria.</title>
        <authorList>
            <person name="Slater S.C."/>
            <person name="Goldman B.S."/>
            <person name="Goodner B."/>
            <person name="Setubal J.C."/>
            <person name="Farrand S.K."/>
            <person name="Nester E.W."/>
            <person name="Burr T.J."/>
            <person name="Banta L."/>
            <person name="Dickerman A.W."/>
            <person name="Paulsen I."/>
            <person name="Otten L."/>
            <person name="Suen G."/>
            <person name="Welch R."/>
            <person name="Almeida N.F."/>
            <person name="Arnold F."/>
            <person name="Burton O.T."/>
            <person name="Du Z."/>
            <person name="Ewing A."/>
            <person name="Godsy E."/>
            <person name="Heisel S."/>
            <person name="Houmiel K.L."/>
            <person name="Jhaveri J."/>
            <person name="Lu J."/>
            <person name="Miller N.M."/>
            <person name="Norton S."/>
            <person name="Chen Q."/>
            <person name="Phoolcharoen W."/>
            <person name="Ohlin V."/>
            <person name="Ondrusek D."/>
            <person name="Pride N."/>
            <person name="Stricklin S.L."/>
            <person name="Sun J."/>
            <person name="Wheeler C."/>
            <person name="Wilson L."/>
            <person name="Zhu H."/>
            <person name="Wood D.W."/>
        </authorList>
    </citation>
    <scope>NUCLEOTIDE SEQUENCE [LARGE SCALE GENOMIC DNA]</scope>
    <source>
        <strain>K84 / ATCC BAA-868</strain>
    </source>
</reference>
<proteinExistence type="inferred from homology"/>
<sequence>MLKFTEEHEWLNIEGDVATVGITAHAAGQLGDLVFVELPEVGASFSKGDDAATVESVKAASEVYCPLDGEITEINEAITADPELVNSDPMGAGWFFKLKLKNVADADGLLDESGYKELIG</sequence>
<evidence type="ECO:0000255" key="1">
    <source>
        <dbReference type="HAMAP-Rule" id="MF_00272"/>
    </source>
</evidence>
<evidence type="ECO:0000255" key="2">
    <source>
        <dbReference type="PROSITE-ProRule" id="PRU01066"/>
    </source>
</evidence>
<feature type="chain" id="PRO_1000190186" description="Glycine cleavage system H protein">
    <location>
        <begin position="1"/>
        <end position="120"/>
    </location>
</feature>
<feature type="domain" description="Lipoyl-binding" evidence="2">
    <location>
        <begin position="17"/>
        <end position="99"/>
    </location>
</feature>
<feature type="modified residue" description="N6-lipoyllysine" evidence="1">
    <location>
        <position position="58"/>
    </location>
</feature>
<organism>
    <name type="scientific">Rhizobium rhizogenes (strain K84 / ATCC BAA-868)</name>
    <name type="common">Agrobacterium radiobacter</name>
    <dbReference type="NCBI Taxonomy" id="311403"/>
    <lineage>
        <taxon>Bacteria</taxon>
        <taxon>Pseudomonadati</taxon>
        <taxon>Pseudomonadota</taxon>
        <taxon>Alphaproteobacteria</taxon>
        <taxon>Hyphomicrobiales</taxon>
        <taxon>Rhizobiaceae</taxon>
        <taxon>Rhizobium/Agrobacterium group</taxon>
        <taxon>Rhizobium</taxon>
    </lineage>
</organism>
<accession>B9JFK6</accession>